<dbReference type="EC" id="2.7.11.33" evidence="1"/>
<dbReference type="EC" id="2.7.4.28" evidence="1"/>
<dbReference type="EMBL" id="CP000675">
    <property type="protein sequence ID" value="ABQ54923.1"/>
    <property type="molecule type" value="Genomic_DNA"/>
</dbReference>
<dbReference type="RefSeq" id="WP_010947257.1">
    <property type="nucleotide sequence ID" value="NZ_JAPMSS010000002.1"/>
</dbReference>
<dbReference type="SMR" id="A5IC23"/>
<dbReference type="KEGG" id="lpc:LPC_0949"/>
<dbReference type="HOGENOM" id="CLU_046206_1_0_6"/>
<dbReference type="GO" id="GO:0043531">
    <property type="term" value="F:ADP binding"/>
    <property type="evidence" value="ECO:0007669"/>
    <property type="project" value="UniProtKB-UniRule"/>
</dbReference>
<dbReference type="GO" id="GO:0005524">
    <property type="term" value="F:ATP binding"/>
    <property type="evidence" value="ECO:0007669"/>
    <property type="project" value="InterPro"/>
</dbReference>
<dbReference type="GO" id="GO:0016776">
    <property type="term" value="F:phosphotransferase activity, phosphate group as acceptor"/>
    <property type="evidence" value="ECO:0007669"/>
    <property type="project" value="UniProtKB-UniRule"/>
</dbReference>
<dbReference type="GO" id="GO:0004674">
    <property type="term" value="F:protein serine/threonine kinase activity"/>
    <property type="evidence" value="ECO:0007669"/>
    <property type="project" value="UniProtKB-UniRule"/>
</dbReference>
<dbReference type="HAMAP" id="MF_01062">
    <property type="entry name" value="PSRP"/>
    <property type="match status" value="1"/>
</dbReference>
<dbReference type="InterPro" id="IPR005177">
    <property type="entry name" value="Kinase-pyrophosphorylase"/>
</dbReference>
<dbReference type="InterPro" id="IPR026530">
    <property type="entry name" value="PSRP"/>
</dbReference>
<dbReference type="NCBIfam" id="NF003742">
    <property type="entry name" value="PRK05339.1"/>
    <property type="match status" value="1"/>
</dbReference>
<dbReference type="PANTHER" id="PTHR31756">
    <property type="entry name" value="PYRUVATE, PHOSPHATE DIKINASE REGULATORY PROTEIN 1, CHLOROPLASTIC"/>
    <property type="match status" value="1"/>
</dbReference>
<dbReference type="PANTHER" id="PTHR31756:SF3">
    <property type="entry name" value="PYRUVATE, PHOSPHATE DIKINASE REGULATORY PROTEIN 1, CHLOROPLASTIC"/>
    <property type="match status" value="1"/>
</dbReference>
<dbReference type="Pfam" id="PF03618">
    <property type="entry name" value="Kinase-PPPase"/>
    <property type="match status" value="1"/>
</dbReference>
<evidence type="ECO:0000255" key="1">
    <source>
        <dbReference type="HAMAP-Rule" id="MF_01062"/>
    </source>
</evidence>
<protein>
    <recommendedName>
        <fullName evidence="1">Putative phosphoenolpyruvate synthase regulatory protein</fullName>
        <shortName evidence="1">PEP synthase regulatory protein</shortName>
        <shortName evidence="1">PSRP</shortName>
        <ecNumber evidence="1">2.7.11.33</ecNumber>
        <ecNumber evidence="1">2.7.4.28</ecNumber>
    </recommendedName>
    <alternativeName>
        <fullName evidence="1">Pyruvate, water dikinase regulatory protein</fullName>
    </alternativeName>
</protein>
<reference key="1">
    <citation type="submission" date="2006-11" db="EMBL/GenBank/DDBJ databases">
        <title>Identification and characterization of a new conjugation/ type IVA secretion system (trb/tra) of L. pneumophila Corby localized on a mobile genomic island.</title>
        <authorList>
            <person name="Gloeckner G."/>
            <person name="Albert-Weissenberger C."/>
            <person name="Weinmann E."/>
            <person name="Jacobi S."/>
            <person name="Schunder E."/>
            <person name="Steinert M."/>
            <person name="Buchrieser C."/>
            <person name="Hacker J."/>
            <person name="Heuner K."/>
        </authorList>
    </citation>
    <scope>NUCLEOTIDE SEQUENCE [LARGE SCALE GENOMIC DNA]</scope>
    <source>
        <strain>Corby</strain>
    </source>
</reference>
<comment type="function">
    <text evidence="1">Bifunctional serine/threonine kinase and phosphorylase involved in the regulation of the phosphoenolpyruvate synthase (PEPS) by catalyzing its phosphorylation/dephosphorylation.</text>
</comment>
<comment type="catalytic activity">
    <reaction evidence="1">
        <text>[pyruvate, water dikinase] + ADP = [pyruvate, water dikinase]-phosphate + AMP + H(+)</text>
        <dbReference type="Rhea" id="RHEA:46020"/>
        <dbReference type="Rhea" id="RHEA-COMP:11425"/>
        <dbReference type="Rhea" id="RHEA-COMP:11426"/>
        <dbReference type="ChEBI" id="CHEBI:15378"/>
        <dbReference type="ChEBI" id="CHEBI:43176"/>
        <dbReference type="ChEBI" id="CHEBI:68546"/>
        <dbReference type="ChEBI" id="CHEBI:456215"/>
        <dbReference type="ChEBI" id="CHEBI:456216"/>
        <dbReference type="EC" id="2.7.11.33"/>
    </reaction>
</comment>
<comment type="catalytic activity">
    <reaction evidence="1">
        <text>[pyruvate, water dikinase]-phosphate + phosphate + H(+) = [pyruvate, water dikinase] + diphosphate</text>
        <dbReference type="Rhea" id="RHEA:48580"/>
        <dbReference type="Rhea" id="RHEA-COMP:11425"/>
        <dbReference type="Rhea" id="RHEA-COMP:11426"/>
        <dbReference type="ChEBI" id="CHEBI:15378"/>
        <dbReference type="ChEBI" id="CHEBI:33019"/>
        <dbReference type="ChEBI" id="CHEBI:43176"/>
        <dbReference type="ChEBI" id="CHEBI:43474"/>
        <dbReference type="ChEBI" id="CHEBI:68546"/>
        <dbReference type="EC" id="2.7.4.28"/>
    </reaction>
</comment>
<comment type="similarity">
    <text evidence="1">Belongs to the pyruvate, phosphate/water dikinase regulatory protein family. PSRP subfamily.</text>
</comment>
<proteinExistence type="inferred from homology"/>
<feature type="chain" id="PRO_0000316693" description="Putative phosphoenolpyruvate synthase regulatory protein">
    <location>
        <begin position="1"/>
        <end position="271"/>
    </location>
</feature>
<feature type="binding site" evidence="1">
    <location>
        <begin position="152"/>
        <end position="159"/>
    </location>
    <ligand>
        <name>ADP</name>
        <dbReference type="ChEBI" id="CHEBI:456216"/>
    </ligand>
</feature>
<keyword id="KW-0418">Kinase</keyword>
<keyword id="KW-0547">Nucleotide-binding</keyword>
<keyword id="KW-0723">Serine/threonine-protein kinase</keyword>
<keyword id="KW-0808">Transferase</keyword>
<gene>
    <name type="ordered locus">LPC_0949</name>
</gene>
<accession>A5IC23</accession>
<organism>
    <name type="scientific">Legionella pneumophila (strain Corby)</name>
    <dbReference type="NCBI Taxonomy" id="400673"/>
    <lineage>
        <taxon>Bacteria</taxon>
        <taxon>Pseudomonadati</taxon>
        <taxon>Pseudomonadota</taxon>
        <taxon>Gammaproteobacteria</taxon>
        <taxon>Legionellales</taxon>
        <taxon>Legionellaceae</taxon>
        <taxon>Legionella</taxon>
    </lineage>
</organism>
<sequence>MKRYVFMLSDGTGITAETLGNSLITQFENIQFEKITIPYIDSTHRAESVVLRINQCFSEQGTKPLVFMTLVDPEIRQAIKKAHACVFDLFSIFIGPLENELEEKSSYTVGRTHGVANVKSYSHRIEAIDFALSHDDGIKTRGYDKADIILIGVSRCGKTPSCLYMALQYGILAANYPFTEEDLVGFRLPEVLRPYKQKLFGLTIDAQRLQQIRSERRPNSKYASAEQCRLEVTEVEAMYQRENIPYINSTKYSIEEISTKVLAIAGLQRKI</sequence>
<name>PSRP_LEGPC</name>